<evidence type="ECO:0000255" key="1">
    <source>
        <dbReference type="HAMAP-Rule" id="MF_00815"/>
    </source>
</evidence>
<name>ATPG_PROMT</name>
<protein>
    <recommendedName>
        <fullName evidence="1">ATP synthase gamma chain</fullName>
    </recommendedName>
    <alternativeName>
        <fullName evidence="1">ATP synthase F1 sector gamma subunit</fullName>
    </alternativeName>
    <alternativeName>
        <fullName evidence="1">F-ATPase gamma subunit</fullName>
    </alternativeName>
</protein>
<keyword id="KW-0066">ATP synthesis</keyword>
<keyword id="KW-0139">CF(1)</keyword>
<keyword id="KW-0375">Hydrogen ion transport</keyword>
<keyword id="KW-0406">Ion transport</keyword>
<keyword id="KW-0472">Membrane</keyword>
<keyword id="KW-1185">Reference proteome</keyword>
<keyword id="KW-0793">Thylakoid</keyword>
<keyword id="KW-0813">Transport</keyword>
<accession>Q46J58</accession>
<dbReference type="EMBL" id="CP000095">
    <property type="protein sequence ID" value="AAZ58470.1"/>
    <property type="molecule type" value="Genomic_DNA"/>
</dbReference>
<dbReference type="RefSeq" id="WP_011295326.1">
    <property type="nucleotide sequence ID" value="NC_007335.2"/>
</dbReference>
<dbReference type="SMR" id="Q46J58"/>
<dbReference type="STRING" id="59920.PMN2A_0980"/>
<dbReference type="KEGG" id="pmn:PMN2A_0980"/>
<dbReference type="HOGENOM" id="CLU_050669_0_0_3"/>
<dbReference type="OrthoDB" id="9812769at2"/>
<dbReference type="PhylomeDB" id="Q46J58"/>
<dbReference type="Proteomes" id="UP000002535">
    <property type="component" value="Chromosome"/>
</dbReference>
<dbReference type="GO" id="GO:0031676">
    <property type="term" value="C:plasma membrane-derived thylakoid membrane"/>
    <property type="evidence" value="ECO:0007669"/>
    <property type="project" value="UniProtKB-SubCell"/>
</dbReference>
<dbReference type="GO" id="GO:0045259">
    <property type="term" value="C:proton-transporting ATP synthase complex"/>
    <property type="evidence" value="ECO:0007669"/>
    <property type="project" value="UniProtKB-KW"/>
</dbReference>
<dbReference type="GO" id="GO:0005524">
    <property type="term" value="F:ATP binding"/>
    <property type="evidence" value="ECO:0007669"/>
    <property type="project" value="UniProtKB-UniRule"/>
</dbReference>
<dbReference type="GO" id="GO:0046933">
    <property type="term" value="F:proton-transporting ATP synthase activity, rotational mechanism"/>
    <property type="evidence" value="ECO:0007669"/>
    <property type="project" value="UniProtKB-UniRule"/>
</dbReference>
<dbReference type="CDD" id="cd12151">
    <property type="entry name" value="F1-ATPase_gamma"/>
    <property type="match status" value="1"/>
</dbReference>
<dbReference type="FunFam" id="3.40.1380.10:FF:000006">
    <property type="entry name" value="ATP synthase gamma chain"/>
    <property type="match status" value="1"/>
</dbReference>
<dbReference type="FunFam" id="1.10.287.80:FF:000003">
    <property type="entry name" value="ATP synthase gamma chain, chloroplastic"/>
    <property type="match status" value="1"/>
</dbReference>
<dbReference type="Gene3D" id="3.40.1380.10">
    <property type="match status" value="1"/>
</dbReference>
<dbReference type="Gene3D" id="1.10.287.80">
    <property type="entry name" value="ATP synthase, gamma subunit, helix hairpin domain"/>
    <property type="match status" value="2"/>
</dbReference>
<dbReference type="HAMAP" id="MF_00815">
    <property type="entry name" value="ATP_synth_gamma_bact"/>
    <property type="match status" value="1"/>
</dbReference>
<dbReference type="InterPro" id="IPR035968">
    <property type="entry name" value="ATP_synth_F1_ATPase_gsu"/>
</dbReference>
<dbReference type="InterPro" id="IPR000131">
    <property type="entry name" value="ATP_synth_F1_gsu"/>
</dbReference>
<dbReference type="InterPro" id="IPR023632">
    <property type="entry name" value="ATP_synth_F1_gsu_CS"/>
</dbReference>
<dbReference type="NCBIfam" id="TIGR01146">
    <property type="entry name" value="ATPsyn_F1gamma"/>
    <property type="match status" value="1"/>
</dbReference>
<dbReference type="NCBIfam" id="NF004145">
    <property type="entry name" value="PRK05621.1-2"/>
    <property type="match status" value="1"/>
</dbReference>
<dbReference type="PANTHER" id="PTHR11693">
    <property type="entry name" value="ATP SYNTHASE GAMMA CHAIN"/>
    <property type="match status" value="1"/>
</dbReference>
<dbReference type="PANTHER" id="PTHR11693:SF41">
    <property type="entry name" value="ATP SYNTHASE GAMMA CHAIN, CHLOROPLASTIC"/>
    <property type="match status" value="1"/>
</dbReference>
<dbReference type="Pfam" id="PF00231">
    <property type="entry name" value="ATP-synt"/>
    <property type="match status" value="1"/>
</dbReference>
<dbReference type="PRINTS" id="PR00126">
    <property type="entry name" value="ATPASEGAMMA"/>
</dbReference>
<dbReference type="SUPFAM" id="SSF52943">
    <property type="entry name" value="ATP synthase (F1-ATPase), gamma subunit"/>
    <property type="match status" value="1"/>
</dbReference>
<dbReference type="PROSITE" id="PS00153">
    <property type="entry name" value="ATPASE_GAMMA"/>
    <property type="match status" value="1"/>
</dbReference>
<gene>
    <name evidence="1" type="primary">atpG</name>
    <name evidence="1" type="synonym">atpC</name>
    <name type="ordered locus">PMN2A_0980</name>
</gene>
<proteinExistence type="inferred from homology"/>
<comment type="function">
    <text evidence="1">Produces ATP from ADP in the presence of a proton gradient across the membrane. The gamma chain is believed to be important in regulating ATPase activity and the flow of protons through the CF(0) complex.</text>
</comment>
<comment type="subunit">
    <text evidence="1">F-type ATPases have 2 components, CF(1) - the catalytic core - and CF(0) - the membrane proton channel. CF(1) has five subunits: alpha(3), beta(3), gamma(1), delta(1), epsilon(1). CF(0) has three main subunits: a, b and c.</text>
</comment>
<comment type="subcellular location">
    <subcellularLocation>
        <location evidence="1">Cellular thylakoid membrane</location>
        <topology evidence="1">Peripheral membrane protein</topology>
    </subcellularLocation>
</comment>
<comment type="similarity">
    <text evidence="1">Belongs to the ATPase gamma chain family.</text>
</comment>
<sequence length="316" mass="35060">MANLKDIRDRIVSVKNTRKITEAMRLVAAAKVRRAQDQVLRSRPFADRLARVLENIQSRMQFEAADSPLLNKREVKTITLLAVTGDRGLCGGYNANIIKRTEKRYAELKGQGYSPDLVLIGKKAIGYFENRSSLYKIRATFKELEQVPTSEDAASITSEVLAEFLSESTDRVEVIFTKFVSLVSCNPTIQTLLPLDPQGIADSEDEIFRLTTKDSQLIIEKDAAPSNEEPKLPSDIVFEQSPDQLLNALLPLYLQNQLLRALQESAASELASRMTAMNNASDNAKELAKNLTIDYNKARQAAITQEILEVVGGASA</sequence>
<reference key="1">
    <citation type="journal article" date="2007" name="PLoS Genet.">
        <title>Patterns and implications of gene gain and loss in the evolution of Prochlorococcus.</title>
        <authorList>
            <person name="Kettler G.C."/>
            <person name="Martiny A.C."/>
            <person name="Huang K."/>
            <person name="Zucker J."/>
            <person name="Coleman M.L."/>
            <person name="Rodrigue S."/>
            <person name="Chen F."/>
            <person name="Lapidus A."/>
            <person name="Ferriera S."/>
            <person name="Johnson J."/>
            <person name="Steglich C."/>
            <person name="Church G.M."/>
            <person name="Richardson P."/>
            <person name="Chisholm S.W."/>
        </authorList>
    </citation>
    <scope>NUCLEOTIDE SEQUENCE [LARGE SCALE GENOMIC DNA]</scope>
    <source>
        <strain>NATL2A</strain>
    </source>
</reference>
<organism>
    <name type="scientific">Prochlorococcus marinus (strain NATL2A)</name>
    <dbReference type="NCBI Taxonomy" id="59920"/>
    <lineage>
        <taxon>Bacteria</taxon>
        <taxon>Bacillati</taxon>
        <taxon>Cyanobacteriota</taxon>
        <taxon>Cyanophyceae</taxon>
        <taxon>Synechococcales</taxon>
        <taxon>Prochlorococcaceae</taxon>
        <taxon>Prochlorococcus</taxon>
    </lineage>
</organism>
<feature type="chain" id="PRO_1000053288" description="ATP synthase gamma chain">
    <location>
        <begin position="1"/>
        <end position="316"/>
    </location>
</feature>